<reference key="1">
    <citation type="submission" date="2007-02" db="EMBL/GenBank/DDBJ databases">
        <title>Complete sequence of Clostridium thermocellum ATCC 27405.</title>
        <authorList>
            <consortium name="US DOE Joint Genome Institute"/>
            <person name="Copeland A."/>
            <person name="Lucas S."/>
            <person name="Lapidus A."/>
            <person name="Barry K."/>
            <person name="Detter J.C."/>
            <person name="Glavina del Rio T."/>
            <person name="Hammon N."/>
            <person name="Israni S."/>
            <person name="Dalin E."/>
            <person name="Tice H."/>
            <person name="Pitluck S."/>
            <person name="Chertkov O."/>
            <person name="Brettin T."/>
            <person name="Bruce D."/>
            <person name="Han C."/>
            <person name="Tapia R."/>
            <person name="Gilna P."/>
            <person name="Schmutz J."/>
            <person name="Larimer F."/>
            <person name="Land M."/>
            <person name="Hauser L."/>
            <person name="Kyrpides N."/>
            <person name="Mikhailova N."/>
            <person name="Wu J.H.D."/>
            <person name="Newcomb M."/>
            <person name="Richardson P."/>
        </authorList>
    </citation>
    <scope>NUCLEOTIDE SEQUENCE [LARGE SCALE GENOMIC DNA]</scope>
    <source>
        <strain>ATCC 27405 / DSM 1237 / JCM 9322 / NBRC 103400 / NCIMB 10682 / NRRL B-4536 / VPI 7372</strain>
    </source>
</reference>
<proteinExistence type="inferred from homology"/>
<accession>A3DEB6</accession>
<feature type="chain" id="PRO_1000074217" description="Probable tRNA sulfurtransferase">
    <location>
        <begin position="1"/>
        <end position="392"/>
    </location>
</feature>
<feature type="domain" description="THUMP" evidence="1">
    <location>
        <begin position="61"/>
        <end position="168"/>
    </location>
</feature>
<feature type="binding site" evidence="1">
    <location>
        <begin position="185"/>
        <end position="186"/>
    </location>
    <ligand>
        <name>ATP</name>
        <dbReference type="ChEBI" id="CHEBI:30616"/>
    </ligand>
</feature>
<feature type="binding site" evidence="1">
    <location>
        <begin position="210"/>
        <end position="211"/>
    </location>
    <ligand>
        <name>ATP</name>
        <dbReference type="ChEBI" id="CHEBI:30616"/>
    </ligand>
</feature>
<feature type="binding site" evidence="1">
    <location>
        <position position="267"/>
    </location>
    <ligand>
        <name>ATP</name>
        <dbReference type="ChEBI" id="CHEBI:30616"/>
    </ligand>
</feature>
<feature type="binding site" evidence="1">
    <location>
        <position position="289"/>
    </location>
    <ligand>
        <name>ATP</name>
        <dbReference type="ChEBI" id="CHEBI:30616"/>
    </ligand>
</feature>
<feature type="binding site" evidence="1">
    <location>
        <position position="298"/>
    </location>
    <ligand>
        <name>ATP</name>
        <dbReference type="ChEBI" id="CHEBI:30616"/>
    </ligand>
</feature>
<organism>
    <name type="scientific">Acetivibrio thermocellus (strain ATCC 27405 / DSM 1237 / JCM 9322 / NBRC 103400 / NCIMB 10682 / NRRL B-4536 / VPI 7372)</name>
    <name type="common">Clostridium thermocellum</name>
    <dbReference type="NCBI Taxonomy" id="203119"/>
    <lineage>
        <taxon>Bacteria</taxon>
        <taxon>Bacillati</taxon>
        <taxon>Bacillota</taxon>
        <taxon>Clostridia</taxon>
        <taxon>Eubacteriales</taxon>
        <taxon>Oscillospiraceae</taxon>
        <taxon>Acetivibrio</taxon>
    </lineage>
</organism>
<sequence length="392" mass="44402">MKKVILVRYGEILLKGLNRPIFEDKLMSNIKRAIHKLGKVRITKSQARIYIEPLEENYDFDEALKLLSKVFGIVSVSPVWKIDSDFECIKENSVKMVKDLINREGYKTFKVETKRGNKRFPMDSPEISRQLGGYILRNVPELSVDVKNPDFILYVEVREFTYIYSEIIQAVCGMPLGSNGKAVLLLSGGIDSPVAGWMIAKRGVEIEAVHFYSYPYTSERAKEKVIELTKILATYCQKINLHIVPFTEIQLEINEKCPHEELTIIMRRAMMRIAEIIANKTGALALVTGESVGQVASQTIQSLVVTNAVVSLPVFRPLIGMDKNEVVDIAKKIGTFETSILPYEDCCTVFVAKHPTTKPKLERIQLSESRLNMEELINKAVENTEVLTITRD</sequence>
<name>THII_ACET2</name>
<evidence type="ECO:0000255" key="1">
    <source>
        <dbReference type="HAMAP-Rule" id="MF_00021"/>
    </source>
</evidence>
<dbReference type="EC" id="2.8.1.4" evidence="1"/>
<dbReference type="EMBL" id="CP000568">
    <property type="protein sequence ID" value="ABN52295.1"/>
    <property type="molecule type" value="Genomic_DNA"/>
</dbReference>
<dbReference type="RefSeq" id="WP_004463512.1">
    <property type="nucleotide sequence ID" value="NC_009012.1"/>
</dbReference>
<dbReference type="SMR" id="A3DEB6"/>
<dbReference type="STRING" id="203119.Cthe_1063"/>
<dbReference type="GeneID" id="35806025"/>
<dbReference type="KEGG" id="cth:Cthe_1063"/>
<dbReference type="eggNOG" id="COG0301">
    <property type="taxonomic scope" value="Bacteria"/>
</dbReference>
<dbReference type="HOGENOM" id="CLU_037952_4_0_9"/>
<dbReference type="OrthoDB" id="9773948at2"/>
<dbReference type="UniPathway" id="UPA00060"/>
<dbReference type="Proteomes" id="UP000002145">
    <property type="component" value="Chromosome"/>
</dbReference>
<dbReference type="GO" id="GO:0005829">
    <property type="term" value="C:cytosol"/>
    <property type="evidence" value="ECO:0007669"/>
    <property type="project" value="TreeGrafter"/>
</dbReference>
<dbReference type="GO" id="GO:0005524">
    <property type="term" value="F:ATP binding"/>
    <property type="evidence" value="ECO:0007669"/>
    <property type="project" value="UniProtKB-UniRule"/>
</dbReference>
<dbReference type="GO" id="GO:0004810">
    <property type="term" value="F:CCA tRNA nucleotidyltransferase activity"/>
    <property type="evidence" value="ECO:0007669"/>
    <property type="project" value="InterPro"/>
</dbReference>
<dbReference type="GO" id="GO:0000049">
    <property type="term" value="F:tRNA binding"/>
    <property type="evidence" value="ECO:0007669"/>
    <property type="project" value="UniProtKB-UniRule"/>
</dbReference>
<dbReference type="GO" id="GO:0140741">
    <property type="term" value="F:tRNA-uracil-4 sulfurtransferase activity"/>
    <property type="evidence" value="ECO:0007669"/>
    <property type="project" value="UniProtKB-EC"/>
</dbReference>
<dbReference type="GO" id="GO:0009228">
    <property type="term" value="P:thiamine biosynthetic process"/>
    <property type="evidence" value="ECO:0007669"/>
    <property type="project" value="UniProtKB-KW"/>
</dbReference>
<dbReference type="GO" id="GO:0009229">
    <property type="term" value="P:thiamine diphosphate biosynthetic process"/>
    <property type="evidence" value="ECO:0007669"/>
    <property type="project" value="UniProtKB-UniRule"/>
</dbReference>
<dbReference type="GO" id="GO:0052837">
    <property type="term" value="P:thiazole biosynthetic process"/>
    <property type="evidence" value="ECO:0007669"/>
    <property type="project" value="TreeGrafter"/>
</dbReference>
<dbReference type="GO" id="GO:0002937">
    <property type="term" value="P:tRNA 4-thiouridine biosynthesis"/>
    <property type="evidence" value="ECO:0007669"/>
    <property type="project" value="TreeGrafter"/>
</dbReference>
<dbReference type="CDD" id="cd01712">
    <property type="entry name" value="PPase_ThiI"/>
    <property type="match status" value="1"/>
</dbReference>
<dbReference type="CDD" id="cd11716">
    <property type="entry name" value="THUMP_ThiI"/>
    <property type="match status" value="1"/>
</dbReference>
<dbReference type="FunFam" id="3.40.50.620:FF:000053">
    <property type="entry name" value="Probable tRNA sulfurtransferase"/>
    <property type="match status" value="1"/>
</dbReference>
<dbReference type="Gene3D" id="3.30.2130.30">
    <property type="match status" value="1"/>
</dbReference>
<dbReference type="Gene3D" id="3.40.50.620">
    <property type="entry name" value="HUPs"/>
    <property type="match status" value="1"/>
</dbReference>
<dbReference type="HAMAP" id="MF_00021">
    <property type="entry name" value="ThiI"/>
    <property type="match status" value="1"/>
</dbReference>
<dbReference type="InterPro" id="IPR014729">
    <property type="entry name" value="Rossmann-like_a/b/a_fold"/>
</dbReference>
<dbReference type="InterPro" id="IPR020536">
    <property type="entry name" value="ThiI_AANH"/>
</dbReference>
<dbReference type="InterPro" id="IPR054173">
    <property type="entry name" value="ThiI_fer"/>
</dbReference>
<dbReference type="InterPro" id="IPR049961">
    <property type="entry name" value="ThiI_N"/>
</dbReference>
<dbReference type="InterPro" id="IPR004114">
    <property type="entry name" value="THUMP_dom"/>
</dbReference>
<dbReference type="InterPro" id="IPR049962">
    <property type="entry name" value="THUMP_ThiI"/>
</dbReference>
<dbReference type="InterPro" id="IPR003720">
    <property type="entry name" value="tRNA_STrfase"/>
</dbReference>
<dbReference type="InterPro" id="IPR050102">
    <property type="entry name" value="tRNA_sulfurtransferase_ThiI"/>
</dbReference>
<dbReference type="NCBIfam" id="TIGR00342">
    <property type="entry name" value="tRNA uracil 4-sulfurtransferase ThiI"/>
    <property type="match status" value="1"/>
</dbReference>
<dbReference type="PANTHER" id="PTHR43209">
    <property type="entry name" value="TRNA SULFURTRANSFERASE"/>
    <property type="match status" value="1"/>
</dbReference>
<dbReference type="PANTHER" id="PTHR43209:SF1">
    <property type="entry name" value="TRNA SULFURTRANSFERASE"/>
    <property type="match status" value="1"/>
</dbReference>
<dbReference type="Pfam" id="PF02568">
    <property type="entry name" value="ThiI"/>
    <property type="match status" value="1"/>
</dbReference>
<dbReference type="Pfam" id="PF22025">
    <property type="entry name" value="ThiI_fer"/>
    <property type="match status" value="1"/>
</dbReference>
<dbReference type="Pfam" id="PF02926">
    <property type="entry name" value="THUMP"/>
    <property type="match status" value="1"/>
</dbReference>
<dbReference type="SMART" id="SM00981">
    <property type="entry name" value="THUMP"/>
    <property type="match status" value="1"/>
</dbReference>
<dbReference type="SUPFAM" id="SSF52402">
    <property type="entry name" value="Adenine nucleotide alpha hydrolases-like"/>
    <property type="match status" value="1"/>
</dbReference>
<dbReference type="SUPFAM" id="SSF143437">
    <property type="entry name" value="THUMP domain-like"/>
    <property type="match status" value="1"/>
</dbReference>
<dbReference type="PROSITE" id="PS51165">
    <property type="entry name" value="THUMP"/>
    <property type="match status" value="1"/>
</dbReference>
<protein>
    <recommendedName>
        <fullName evidence="1">Probable tRNA sulfurtransferase</fullName>
        <ecNumber evidence="1">2.8.1.4</ecNumber>
    </recommendedName>
    <alternativeName>
        <fullName evidence="1">Sulfur carrier protein ThiS sulfurtransferase</fullName>
    </alternativeName>
    <alternativeName>
        <fullName evidence="1">Thiamine biosynthesis protein ThiI</fullName>
    </alternativeName>
    <alternativeName>
        <fullName evidence="1">tRNA 4-thiouridine synthase</fullName>
    </alternativeName>
</protein>
<comment type="function">
    <text evidence="1">Catalyzes the ATP-dependent transfer of a sulfur to tRNA to produce 4-thiouridine in position 8 of tRNAs, which functions as a near-UV photosensor. Also catalyzes the transfer of sulfur to the sulfur carrier protein ThiS, forming ThiS-thiocarboxylate. This is a step in the synthesis of thiazole, in the thiamine biosynthesis pathway. The sulfur is donated as persulfide by IscS.</text>
</comment>
<comment type="catalytic activity">
    <reaction evidence="1">
        <text>[ThiI sulfur-carrier protein]-S-sulfanyl-L-cysteine + a uridine in tRNA + 2 reduced [2Fe-2S]-[ferredoxin] + ATP + H(+) = [ThiI sulfur-carrier protein]-L-cysteine + a 4-thiouridine in tRNA + 2 oxidized [2Fe-2S]-[ferredoxin] + AMP + diphosphate</text>
        <dbReference type="Rhea" id="RHEA:24176"/>
        <dbReference type="Rhea" id="RHEA-COMP:10000"/>
        <dbReference type="Rhea" id="RHEA-COMP:10001"/>
        <dbReference type="Rhea" id="RHEA-COMP:13337"/>
        <dbReference type="Rhea" id="RHEA-COMP:13338"/>
        <dbReference type="Rhea" id="RHEA-COMP:13339"/>
        <dbReference type="Rhea" id="RHEA-COMP:13340"/>
        <dbReference type="ChEBI" id="CHEBI:15378"/>
        <dbReference type="ChEBI" id="CHEBI:29950"/>
        <dbReference type="ChEBI" id="CHEBI:30616"/>
        <dbReference type="ChEBI" id="CHEBI:33019"/>
        <dbReference type="ChEBI" id="CHEBI:33737"/>
        <dbReference type="ChEBI" id="CHEBI:33738"/>
        <dbReference type="ChEBI" id="CHEBI:61963"/>
        <dbReference type="ChEBI" id="CHEBI:65315"/>
        <dbReference type="ChEBI" id="CHEBI:136798"/>
        <dbReference type="ChEBI" id="CHEBI:456215"/>
        <dbReference type="EC" id="2.8.1.4"/>
    </reaction>
</comment>
<comment type="catalytic activity">
    <reaction evidence="1">
        <text>[ThiS sulfur-carrier protein]-C-terminal Gly-Gly-AMP + S-sulfanyl-L-cysteinyl-[cysteine desulfurase] + AH2 = [ThiS sulfur-carrier protein]-C-terminal-Gly-aminoethanethioate + L-cysteinyl-[cysteine desulfurase] + A + AMP + 2 H(+)</text>
        <dbReference type="Rhea" id="RHEA:43340"/>
        <dbReference type="Rhea" id="RHEA-COMP:12157"/>
        <dbReference type="Rhea" id="RHEA-COMP:12158"/>
        <dbReference type="Rhea" id="RHEA-COMP:12910"/>
        <dbReference type="Rhea" id="RHEA-COMP:19908"/>
        <dbReference type="ChEBI" id="CHEBI:13193"/>
        <dbReference type="ChEBI" id="CHEBI:15378"/>
        <dbReference type="ChEBI" id="CHEBI:17499"/>
        <dbReference type="ChEBI" id="CHEBI:29950"/>
        <dbReference type="ChEBI" id="CHEBI:61963"/>
        <dbReference type="ChEBI" id="CHEBI:90618"/>
        <dbReference type="ChEBI" id="CHEBI:232372"/>
        <dbReference type="ChEBI" id="CHEBI:456215"/>
    </reaction>
</comment>
<comment type="pathway">
    <text evidence="1">Cofactor biosynthesis; thiamine diphosphate biosynthesis.</text>
</comment>
<comment type="subcellular location">
    <subcellularLocation>
        <location evidence="1">Cytoplasm</location>
    </subcellularLocation>
</comment>
<comment type="similarity">
    <text evidence="1">Belongs to the ThiI family.</text>
</comment>
<keyword id="KW-0067">ATP-binding</keyword>
<keyword id="KW-0963">Cytoplasm</keyword>
<keyword id="KW-0547">Nucleotide-binding</keyword>
<keyword id="KW-1185">Reference proteome</keyword>
<keyword id="KW-0694">RNA-binding</keyword>
<keyword id="KW-0784">Thiamine biosynthesis</keyword>
<keyword id="KW-0808">Transferase</keyword>
<keyword id="KW-0820">tRNA-binding</keyword>
<gene>
    <name evidence="1" type="primary">thiI</name>
    <name type="ordered locus">Cthe_1063</name>
</gene>